<name>SILB_SALTM</name>
<keyword id="KW-0050">Antiport</keyword>
<keyword id="KW-0406">Ion transport</keyword>
<keyword id="KW-0614">Plasmid</keyword>
<keyword id="KW-0732">Signal</keyword>
<keyword id="KW-0813">Transport</keyword>
<sequence length="430" mass="47720">MASLKIKYAAIIISSLIAGGLISVTAWQYLNSSQKTVPAEQKAPEKKVLFWYDPMKPDTKFDKPGKSPFMDMDLVPKYADESGDKSSGGIRIDPTQVQNLGLKTQKVTRGMLNYSQTIPANVSYNEYQFVIVQARSDGFVEKVYPLTIGDHVKKGTPLIDITIPEWVEAQSEFLLLSGTGGTPTQIKGVLERLRLAGMPEEDIQRLRSTRTIQTRFTIKAPIDGVITAFDLRTGMNISKDKVVAQIQGMDPVWISAAVPESIAYLLKDTSQFEISVPAYPDKTFHVEKWNILPSVDQTTRTLQVRLQVTNKDEFLKPGMNAYLKLNTQSQEMLLIPSQAVIDTGKEQRVITVDDEGKFVPKQIHVLHESQQQSGIGSGLNEGDTVVVSGLFLIDSEANITGALERMRHPEKTENSMPAMSEQPVNMHSGH</sequence>
<evidence type="ECO:0000255" key="1"/>
<evidence type="ECO:0000256" key="2">
    <source>
        <dbReference type="SAM" id="MobiDB-lite"/>
    </source>
</evidence>
<evidence type="ECO:0000305" key="3"/>
<dbReference type="EMBL" id="AF067954">
    <property type="protein sequence ID" value="AAD11748.1"/>
    <property type="molecule type" value="Genomic_DNA"/>
</dbReference>
<dbReference type="RefSeq" id="WP_001446341.1">
    <property type="nucleotide sequence ID" value="NZ_JAETZG010000001.1"/>
</dbReference>
<dbReference type="SMR" id="Q9ZHD0"/>
<dbReference type="GeneID" id="92830464"/>
<dbReference type="GO" id="GO:0016020">
    <property type="term" value="C:membrane"/>
    <property type="evidence" value="ECO:0007669"/>
    <property type="project" value="InterPro"/>
</dbReference>
<dbReference type="GO" id="GO:0030288">
    <property type="term" value="C:outer membrane-bounded periplasmic space"/>
    <property type="evidence" value="ECO:0007669"/>
    <property type="project" value="TreeGrafter"/>
</dbReference>
<dbReference type="GO" id="GO:0015297">
    <property type="term" value="F:antiporter activity"/>
    <property type="evidence" value="ECO:0007669"/>
    <property type="project" value="UniProtKB-KW"/>
</dbReference>
<dbReference type="GO" id="GO:0046914">
    <property type="term" value="F:transition metal ion binding"/>
    <property type="evidence" value="ECO:0007669"/>
    <property type="project" value="TreeGrafter"/>
</dbReference>
<dbReference type="GO" id="GO:0060003">
    <property type="term" value="P:copper ion export"/>
    <property type="evidence" value="ECO:0007669"/>
    <property type="project" value="TreeGrafter"/>
</dbReference>
<dbReference type="GO" id="GO:0015679">
    <property type="term" value="P:plasma membrane copper ion transport"/>
    <property type="evidence" value="ECO:0007669"/>
    <property type="project" value="TreeGrafter"/>
</dbReference>
<dbReference type="GO" id="GO:0009636">
    <property type="term" value="P:response to toxic substance"/>
    <property type="evidence" value="ECO:0007669"/>
    <property type="project" value="UniProtKB-ARBA"/>
</dbReference>
<dbReference type="FunFam" id="2.40.420.20:FF:000003">
    <property type="entry name" value="Cation efflux system protein cusB"/>
    <property type="match status" value="1"/>
</dbReference>
<dbReference type="Gene3D" id="2.40.30.170">
    <property type="match status" value="1"/>
</dbReference>
<dbReference type="Gene3D" id="2.40.420.20">
    <property type="match status" value="1"/>
</dbReference>
<dbReference type="Gene3D" id="2.40.50.100">
    <property type="match status" value="1"/>
</dbReference>
<dbReference type="Gene3D" id="6.10.140.730">
    <property type="match status" value="1"/>
</dbReference>
<dbReference type="InterPro" id="IPR032317">
    <property type="entry name" value="CusB_D23"/>
</dbReference>
<dbReference type="InterPro" id="IPR045800">
    <property type="entry name" value="HMBD"/>
</dbReference>
<dbReference type="InterPro" id="IPR051909">
    <property type="entry name" value="MFP_Cation_Efflux"/>
</dbReference>
<dbReference type="InterPro" id="IPR006143">
    <property type="entry name" value="RND_pump_MFP"/>
</dbReference>
<dbReference type="NCBIfam" id="NF007303">
    <property type="entry name" value="PRK09783.1"/>
    <property type="match status" value="1"/>
</dbReference>
<dbReference type="NCBIfam" id="TIGR01730">
    <property type="entry name" value="RND_mfp"/>
    <property type="match status" value="1"/>
</dbReference>
<dbReference type="PANTHER" id="PTHR30097">
    <property type="entry name" value="CATION EFFLUX SYSTEM PROTEIN CUSB"/>
    <property type="match status" value="1"/>
</dbReference>
<dbReference type="PANTHER" id="PTHR30097:SF15">
    <property type="entry name" value="CATION EFFLUX SYSTEM PROTEIN CUSB"/>
    <property type="match status" value="1"/>
</dbReference>
<dbReference type="Pfam" id="PF16576">
    <property type="entry name" value="HlyD_D23"/>
    <property type="match status" value="1"/>
</dbReference>
<dbReference type="Pfam" id="PF19335">
    <property type="entry name" value="HMBD"/>
    <property type="match status" value="1"/>
</dbReference>
<dbReference type="SUPFAM" id="SSF111369">
    <property type="entry name" value="HlyD-like secretion proteins"/>
    <property type="match status" value="1"/>
</dbReference>
<organism>
    <name type="scientific">Salmonella typhimurium</name>
    <dbReference type="NCBI Taxonomy" id="90371"/>
    <lineage>
        <taxon>Bacteria</taxon>
        <taxon>Pseudomonadati</taxon>
        <taxon>Pseudomonadota</taxon>
        <taxon>Gammaproteobacteria</taxon>
        <taxon>Enterobacterales</taxon>
        <taxon>Enterobacteriaceae</taxon>
        <taxon>Salmonella</taxon>
    </lineage>
</organism>
<comment type="function">
    <text>Component of the sil cation efflux system that confers resistance to silver. May be part of a three-component cation/proton antiporter.</text>
</comment>
<comment type="similarity">
    <text evidence="3">Belongs to the membrane fusion protein (MFP) (TC 8.A.1) family.</text>
</comment>
<feature type="signal peptide" evidence="1">
    <location>
        <begin position="1"/>
        <end position="28"/>
    </location>
</feature>
<feature type="chain" id="PRO_0000018715" description="Putative membrane fusion protein SilB">
    <location>
        <begin position="29"/>
        <end position="430"/>
    </location>
</feature>
<feature type="region of interest" description="Disordered" evidence="2">
    <location>
        <begin position="407"/>
        <end position="430"/>
    </location>
</feature>
<feature type="compositionally biased region" description="Polar residues" evidence="2">
    <location>
        <begin position="414"/>
        <end position="430"/>
    </location>
</feature>
<reference key="1">
    <citation type="journal article" date="1999" name="Nat. Med.">
        <title>Molecular basis for resistance to silver cations in Salmonella.</title>
        <authorList>
            <person name="Gupta A."/>
            <person name="Matsui K."/>
            <person name="Lo J.-F."/>
            <person name="Silver S."/>
        </authorList>
    </citation>
    <scope>NUCLEOTIDE SEQUENCE [GENOMIC DNA]</scope>
</reference>
<accession>Q9ZHD0</accession>
<gene>
    <name type="primary">silB</name>
</gene>
<geneLocation type="plasmid">
    <name>pMG101</name>
</geneLocation>
<protein>
    <recommendedName>
        <fullName>Putative membrane fusion protein SilB</fullName>
    </recommendedName>
</protein>
<proteinExistence type="inferred from homology"/>